<evidence type="ECO:0000255" key="1">
    <source>
        <dbReference type="HAMAP-Rule" id="MF_00211"/>
    </source>
</evidence>
<organism>
    <name type="scientific">Jannaschia sp. (strain CCS1)</name>
    <dbReference type="NCBI Taxonomy" id="290400"/>
    <lineage>
        <taxon>Bacteria</taxon>
        <taxon>Pseudomonadati</taxon>
        <taxon>Pseudomonadota</taxon>
        <taxon>Alphaproteobacteria</taxon>
        <taxon>Rhodobacterales</taxon>
        <taxon>Roseobacteraceae</taxon>
        <taxon>Jannaschia</taxon>
    </lineage>
</organism>
<feature type="chain" id="PRO_0000325432" description="Anthranilate phosphoribosyltransferase">
    <location>
        <begin position="1"/>
        <end position="345"/>
    </location>
</feature>
<feature type="binding site" evidence="1">
    <location>
        <position position="86"/>
    </location>
    <ligand>
        <name>5-phospho-alpha-D-ribose 1-diphosphate</name>
        <dbReference type="ChEBI" id="CHEBI:58017"/>
    </ligand>
</feature>
<feature type="binding site" evidence="1">
    <location>
        <position position="86"/>
    </location>
    <ligand>
        <name>anthranilate</name>
        <dbReference type="ChEBI" id="CHEBI:16567"/>
        <label>1</label>
    </ligand>
</feature>
<feature type="binding site" evidence="1">
    <location>
        <begin position="89"/>
        <end position="90"/>
    </location>
    <ligand>
        <name>5-phospho-alpha-D-ribose 1-diphosphate</name>
        <dbReference type="ChEBI" id="CHEBI:58017"/>
    </ligand>
</feature>
<feature type="binding site" evidence="1">
    <location>
        <position position="94"/>
    </location>
    <ligand>
        <name>5-phospho-alpha-D-ribose 1-diphosphate</name>
        <dbReference type="ChEBI" id="CHEBI:58017"/>
    </ligand>
</feature>
<feature type="binding site" evidence="1">
    <location>
        <begin position="96"/>
        <end position="99"/>
    </location>
    <ligand>
        <name>5-phospho-alpha-D-ribose 1-diphosphate</name>
        <dbReference type="ChEBI" id="CHEBI:58017"/>
    </ligand>
</feature>
<feature type="binding site" evidence="1">
    <location>
        <position position="98"/>
    </location>
    <ligand>
        <name>Mg(2+)</name>
        <dbReference type="ChEBI" id="CHEBI:18420"/>
        <label>1</label>
    </ligand>
</feature>
<feature type="binding site" evidence="1">
    <location>
        <begin position="114"/>
        <end position="122"/>
    </location>
    <ligand>
        <name>5-phospho-alpha-D-ribose 1-diphosphate</name>
        <dbReference type="ChEBI" id="CHEBI:58017"/>
    </ligand>
</feature>
<feature type="binding site" evidence="1">
    <location>
        <position position="117"/>
    </location>
    <ligand>
        <name>anthranilate</name>
        <dbReference type="ChEBI" id="CHEBI:16567"/>
        <label>1</label>
    </ligand>
</feature>
<feature type="binding site" evidence="1">
    <location>
        <position position="126"/>
    </location>
    <ligand>
        <name>5-phospho-alpha-D-ribose 1-diphosphate</name>
        <dbReference type="ChEBI" id="CHEBI:58017"/>
    </ligand>
</feature>
<feature type="binding site" evidence="1">
    <location>
        <position position="172"/>
    </location>
    <ligand>
        <name>anthranilate</name>
        <dbReference type="ChEBI" id="CHEBI:16567"/>
        <label>2</label>
    </ligand>
</feature>
<feature type="binding site" evidence="1">
    <location>
        <position position="231"/>
    </location>
    <ligand>
        <name>Mg(2+)</name>
        <dbReference type="ChEBI" id="CHEBI:18420"/>
        <label>2</label>
    </ligand>
</feature>
<feature type="binding site" evidence="1">
    <location>
        <position position="232"/>
    </location>
    <ligand>
        <name>Mg(2+)</name>
        <dbReference type="ChEBI" id="CHEBI:18420"/>
        <label>1</label>
    </ligand>
</feature>
<feature type="binding site" evidence="1">
    <location>
        <position position="232"/>
    </location>
    <ligand>
        <name>Mg(2+)</name>
        <dbReference type="ChEBI" id="CHEBI:18420"/>
        <label>2</label>
    </ligand>
</feature>
<name>TRPD_JANSC</name>
<accession>Q28R66</accession>
<sequence length="345" mass="35725">MTDAPLSEAMKPIIFSASEGPLSRAQAEEAFNLMFEGLASPAQMGGLIMAIRARGESVAEYAAAAQVMRDRCVKVSAPDGAMDIVGTGGDGMGTLNISTATAFVVAGAGVPVAKHGNRNLSSKSGAADVLTQMGINVMVGAAVVEQSLKEAGIGFMMAPMHHPAVKHVMPIRQELGCKTIFNILGPLTNPAGAKRQLTGAFAIDLIYPMAETLKELGSEAAWLVHGSDGTDEISISGKTDVVELKDGALRSRVVHPEDAGLPVHPFRDILGGTPDENAQAFRDLLDGAQGAYRDAVLLNAAAALIVAGRVTELRDGVEIARESIDSGAAKRAVEAVARVTSTSTA</sequence>
<reference key="1">
    <citation type="submission" date="2006-02" db="EMBL/GenBank/DDBJ databases">
        <title>Complete sequence of chromosome of Jannaschia sp. CCS1.</title>
        <authorList>
            <consortium name="US DOE Joint Genome Institute"/>
            <person name="Copeland A."/>
            <person name="Lucas S."/>
            <person name="Lapidus A."/>
            <person name="Barry K."/>
            <person name="Detter J.C."/>
            <person name="Glavina del Rio T."/>
            <person name="Hammon N."/>
            <person name="Israni S."/>
            <person name="Pitluck S."/>
            <person name="Brettin T."/>
            <person name="Bruce D."/>
            <person name="Han C."/>
            <person name="Tapia R."/>
            <person name="Gilna P."/>
            <person name="Chertkov O."/>
            <person name="Saunders E."/>
            <person name="Schmutz J."/>
            <person name="Larimer F."/>
            <person name="Land M."/>
            <person name="Kyrpides N."/>
            <person name="Lykidis A."/>
            <person name="Moran M.A."/>
            <person name="Belas R."/>
            <person name="Ye W."/>
            <person name="Buchan A."/>
            <person name="Gonzalez J.M."/>
            <person name="Schell M.A."/>
            <person name="Richardson P."/>
        </authorList>
    </citation>
    <scope>NUCLEOTIDE SEQUENCE [LARGE SCALE GENOMIC DNA]</scope>
    <source>
        <strain>CCS1</strain>
    </source>
</reference>
<gene>
    <name evidence="1" type="primary">trpD</name>
    <name type="ordered locus">Jann_1879</name>
</gene>
<comment type="function">
    <text evidence="1">Catalyzes the transfer of the phosphoribosyl group of 5-phosphorylribose-1-pyrophosphate (PRPP) to anthranilate to yield N-(5'-phosphoribosyl)-anthranilate (PRA).</text>
</comment>
<comment type="catalytic activity">
    <reaction evidence="1">
        <text>N-(5-phospho-beta-D-ribosyl)anthranilate + diphosphate = 5-phospho-alpha-D-ribose 1-diphosphate + anthranilate</text>
        <dbReference type="Rhea" id="RHEA:11768"/>
        <dbReference type="ChEBI" id="CHEBI:16567"/>
        <dbReference type="ChEBI" id="CHEBI:18277"/>
        <dbReference type="ChEBI" id="CHEBI:33019"/>
        <dbReference type="ChEBI" id="CHEBI:58017"/>
        <dbReference type="EC" id="2.4.2.18"/>
    </reaction>
</comment>
<comment type="cofactor">
    <cofactor evidence="1">
        <name>Mg(2+)</name>
        <dbReference type="ChEBI" id="CHEBI:18420"/>
    </cofactor>
    <text evidence="1">Binds 2 magnesium ions per monomer.</text>
</comment>
<comment type="pathway">
    <text evidence="1">Amino-acid biosynthesis; L-tryptophan biosynthesis; L-tryptophan from chorismate: step 2/5.</text>
</comment>
<comment type="subunit">
    <text evidence="1">Homodimer.</text>
</comment>
<comment type="similarity">
    <text evidence="1">Belongs to the anthranilate phosphoribosyltransferase family.</text>
</comment>
<protein>
    <recommendedName>
        <fullName evidence="1">Anthranilate phosphoribosyltransferase</fullName>
        <ecNumber evidence="1">2.4.2.18</ecNumber>
    </recommendedName>
</protein>
<proteinExistence type="inferred from homology"/>
<keyword id="KW-0028">Amino-acid biosynthesis</keyword>
<keyword id="KW-0057">Aromatic amino acid biosynthesis</keyword>
<keyword id="KW-0328">Glycosyltransferase</keyword>
<keyword id="KW-0460">Magnesium</keyword>
<keyword id="KW-0479">Metal-binding</keyword>
<keyword id="KW-1185">Reference proteome</keyword>
<keyword id="KW-0808">Transferase</keyword>
<keyword id="KW-0822">Tryptophan biosynthesis</keyword>
<dbReference type="EC" id="2.4.2.18" evidence="1"/>
<dbReference type="EMBL" id="CP000264">
    <property type="protein sequence ID" value="ABD54796.1"/>
    <property type="molecule type" value="Genomic_DNA"/>
</dbReference>
<dbReference type="RefSeq" id="WP_011455001.1">
    <property type="nucleotide sequence ID" value="NC_007802.1"/>
</dbReference>
<dbReference type="SMR" id="Q28R66"/>
<dbReference type="STRING" id="290400.Jann_1879"/>
<dbReference type="KEGG" id="jan:Jann_1879"/>
<dbReference type="eggNOG" id="COG0547">
    <property type="taxonomic scope" value="Bacteria"/>
</dbReference>
<dbReference type="HOGENOM" id="CLU_034315_2_1_5"/>
<dbReference type="UniPathway" id="UPA00035">
    <property type="reaction ID" value="UER00041"/>
</dbReference>
<dbReference type="Proteomes" id="UP000008326">
    <property type="component" value="Chromosome"/>
</dbReference>
<dbReference type="GO" id="GO:0005829">
    <property type="term" value="C:cytosol"/>
    <property type="evidence" value="ECO:0007669"/>
    <property type="project" value="TreeGrafter"/>
</dbReference>
<dbReference type="GO" id="GO:0004048">
    <property type="term" value="F:anthranilate phosphoribosyltransferase activity"/>
    <property type="evidence" value="ECO:0007669"/>
    <property type="project" value="UniProtKB-UniRule"/>
</dbReference>
<dbReference type="GO" id="GO:0000287">
    <property type="term" value="F:magnesium ion binding"/>
    <property type="evidence" value="ECO:0007669"/>
    <property type="project" value="UniProtKB-UniRule"/>
</dbReference>
<dbReference type="GO" id="GO:0000162">
    <property type="term" value="P:L-tryptophan biosynthetic process"/>
    <property type="evidence" value="ECO:0007669"/>
    <property type="project" value="UniProtKB-UniRule"/>
</dbReference>
<dbReference type="FunFam" id="3.40.1030.10:FF:000002">
    <property type="entry name" value="Anthranilate phosphoribosyltransferase"/>
    <property type="match status" value="1"/>
</dbReference>
<dbReference type="Gene3D" id="3.40.1030.10">
    <property type="entry name" value="Nucleoside phosphorylase/phosphoribosyltransferase catalytic domain"/>
    <property type="match status" value="1"/>
</dbReference>
<dbReference type="Gene3D" id="1.20.970.10">
    <property type="entry name" value="Transferase, Pyrimidine Nucleoside Phosphorylase, Chain C"/>
    <property type="match status" value="1"/>
</dbReference>
<dbReference type="HAMAP" id="MF_00211">
    <property type="entry name" value="TrpD"/>
    <property type="match status" value="1"/>
</dbReference>
<dbReference type="InterPro" id="IPR005940">
    <property type="entry name" value="Anthranilate_Pribosyl_Tfrase"/>
</dbReference>
<dbReference type="InterPro" id="IPR000312">
    <property type="entry name" value="Glycosyl_Trfase_fam3"/>
</dbReference>
<dbReference type="InterPro" id="IPR017459">
    <property type="entry name" value="Glycosyl_Trfase_fam3_N_dom"/>
</dbReference>
<dbReference type="InterPro" id="IPR036320">
    <property type="entry name" value="Glycosyl_Trfase_fam3_N_dom_sf"/>
</dbReference>
<dbReference type="InterPro" id="IPR035902">
    <property type="entry name" value="Nuc_phospho_transferase"/>
</dbReference>
<dbReference type="NCBIfam" id="TIGR01245">
    <property type="entry name" value="trpD"/>
    <property type="match status" value="1"/>
</dbReference>
<dbReference type="PANTHER" id="PTHR43285">
    <property type="entry name" value="ANTHRANILATE PHOSPHORIBOSYLTRANSFERASE"/>
    <property type="match status" value="1"/>
</dbReference>
<dbReference type="PANTHER" id="PTHR43285:SF2">
    <property type="entry name" value="ANTHRANILATE PHOSPHORIBOSYLTRANSFERASE"/>
    <property type="match status" value="1"/>
</dbReference>
<dbReference type="Pfam" id="PF02885">
    <property type="entry name" value="Glycos_trans_3N"/>
    <property type="match status" value="1"/>
</dbReference>
<dbReference type="Pfam" id="PF00591">
    <property type="entry name" value="Glycos_transf_3"/>
    <property type="match status" value="1"/>
</dbReference>
<dbReference type="SUPFAM" id="SSF52418">
    <property type="entry name" value="Nucleoside phosphorylase/phosphoribosyltransferase catalytic domain"/>
    <property type="match status" value="1"/>
</dbReference>
<dbReference type="SUPFAM" id="SSF47648">
    <property type="entry name" value="Nucleoside phosphorylase/phosphoribosyltransferase N-terminal domain"/>
    <property type="match status" value="1"/>
</dbReference>